<comment type="tissue specificity">
    <text evidence="2">In seeds, expressed in the embryonic axis and in the cotyledons. Not detected in leaves, stems or roots.</text>
</comment>
<comment type="developmental stage">
    <text evidence="2">Expressed during seed development, from 70 days after fertilization (daf) until full maturation and drying at 105 daf. Decreases rapidly after imbibition.</text>
</comment>
<comment type="induction">
    <text evidence="2">Down-regulated by drought in 30 days after fertilization seeds. Not regulated by drought in leaves, cotyledons, hypocotyls and roots.</text>
</comment>
<comment type="similarity">
    <text evidence="4">Belongs to the small hydrophilic plant seed protein family.</text>
</comment>
<sequence>MASHQQNKQELDERARQGETVVPGGTGGKSLEAQQHLAEGRSRGGKTRKEQLGTEGYHEMGRKGGLSTMDKSGEERAQEEAIDIDESKFRTGNNQDKNQNK</sequence>
<feature type="chain" id="PRO_0000431231" description="Protein SLE3">
    <location>
        <begin position="1"/>
        <end position="101"/>
    </location>
</feature>
<feature type="region of interest" description="Disordered" evidence="1">
    <location>
        <begin position="1"/>
        <end position="101"/>
    </location>
</feature>
<feature type="compositionally biased region" description="Basic and acidic residues" evidence="1">
    <location>
        <begin position="7"/>
        <end position="17"/>
    </location>
</feature>
<feature type="compositionally biased region" description="Basic and acidic residues" evidence="1">
    <location>
        <begin position="38"/>
        <end position="62"/>
    </location>
</feature>
<feature type="compositionally biased region" description="Basic and acidic residues" evidence="1">
    <location>
        <begin position="71"/>
        <end position="89"/>
    </location>
</feature>
<feature type="compositionally biased region" description="Polar residues" evidence="1">
    <location>
        <begin position="90"/>
        <end position="101"/>
    </location>
</feature>
<organism>
    <name type="scientific">Glycine max</name>
    <name type="common">Soybean</name>
    <name type="synonym">Glycine hispida</name>
    <dbReference type="NCBI Taxonomy" id="3847"/>
    <lineage>
        <taxon>Eukaryota</taxon>
        <taxon>Viridiplantae</taxon>
        <taxon>Streptophyta</taxon>
        <taxon>Embryophyta</taxon>
        <taxon>Tracheophyta</taxon>
        <taxon>Spermatophyta</taxon>
        <taxon>Magnoliopsida</taxon>
        <taxon>eudicotyledons</taxon>
        <taxon>Gunneridae</taxon>
        <taxon>Pentapetalae</taxon>
        <taxon>rosids</taxon>
        <taxon>fabids</taxon>
        <taxon>Fabales</taxon>
        <taxon>Fabaceae</taxon>
        <taxon>Papilionoideae</taxon>
        <taxon>50 kb inversion clade</taxon>
        <taxon>NPAAA clade</taxon>
        <taxon>indigoferoid/millettioid clade</taxon>
        <taxon>Phaseoleae</taxon>
        <taxon>Glycine</taxon>
        <taxon>Glycine subgen. Soja</taxon>
    </lineage>
</organism>
<dbReference type="EMBL" id="BT090966">
    <property type="protein sequence ID" value="ACU15035.1"/>
    <property type="molecule type" value="mRNA"/>
</dbReference>
<dbReference type="RefSeq" id="NP_001237186.1">
    <property type="nucleotide sequence ID" value="NM_001250257.2"/>
</dbReference>
<dbReference type="FunCoup" id="C6T0L2">
    <property type="interactions" value="187"/>
</dbReference>
<dbReference type="STRING" id="3847.C6T0L2"/>
<dbReference type="PaxDb" id="3847-GLYMA01G29480.1"/>
<dbReference type="EnsemblPlants" id="KRH75950">
    <property type="protein sequence ID" value="KRH75950"/>
    <property type="gene ID" value="GLYMA_01G119600"/>
</dbReference>
<dbReference type="GeneID" id="100500126"/>
<dbReference type="Gramene" id="KRH75950">
    <property type="protein sequence ID" value="KRH75950"/>
    <property type="gene ID" value="GLYMA_01G119600"/>
</dbReference>
<dbReference type="KEGG" id="gmx:100500126"/>
<dbReference type="eggNOG" id="ENOG502S40U">
    <property type="taxonomic scope" value="Eukaryota"/>
</dbReference>
<dbReference type="HOGENOM" id="CLU_144393_0_0_1"/>
<dbReference type="InParanoid" id="C6T0L2"/>
<dbReference type="OMA" id="HERYSEM"/>
<dbReference type="OrthoDB" id="540492at2759"/>
<dbReference type="Proteomes" id="UP000008827">
    <property type="component" value="Chromosome 1"/>
</dbReference>
<dbReference type="GO" id="GO:0009737">
    <property type="term" value="P:response to abscisic acid"/>
    <property type="evidence" value="ECO:0000318"/>
    <property type="project" value="GO_Central"/>
</dbReference>
<dbReference type="InterPro" id="IPR038956">
    <property type="entry name" value="LEA_5"/>
</dbReference>
<dbReference type="InterPro" id="IPR022377">
    <property type="entry name" value="Sm_Hydphi_plant_seed_CS"/>
</dbReference>
<dbReference type="InterPro" id="IPR000389">
    <property type="entry name" value="Small_hydrophilic_seed_prot"/>
</dbReference>
<dbReference type="PANTHER" id="PTHR34671">
    <property type="entry name" value="EM-LIKE PROTEIN GEA1"/>
    <property type="match status" value="1"/>
</dbReference>
<dbReference type="PANTHER" id="PTHR34671:SF11">
    <property type="entry name" value="EM-LIKE PROTEIN GEA1"/>
    <property type="match status" value="1"/>
</dbReference>
<dbReference type="Pfam" id="PF00477">
    <property type="entry name" value="LEA_5"/>
    <property type="match status" value="1"/>
</dbReference>
<dbReference type="PROSITE" id="PS00431">
    <property type="entry name" value="SMALL_HYDR_PLANT_SEED"/>
    <property type="match status" value="1"/>
</dbReference>
<name>SLE3_SOYBN</name>
<reference key="1">
    <citation type="journal article" date="1997" name="Theor. Appl. Genet.">
        <title>Cloning, mapping, and analyses of expression of the Em-like gene family in soybean [Glycine max (L). Merr.].</title>
        <authorList>
            <person name="Calvo E.S."/>
            <person name="Wurtle E.S."/>
            <person name="Shoemaker R.C."/>
        </authorList>
    </citation>
    <scope>NUCLEOTIDE SEQUENCE [GENOMIC DNA]</scope>
    <scope>TISSUE SPECIFICITY</scope>
    <scope>DEVELOPMENTAL STAGE</scope>
    <scope>INDUCTION BY DROUGHT</scope>
    <source>
        <strain>cv. Williams 82</strain>
    </source>
</reference>
<reference key="2">
    <citation type="submission" date="2009-08" db="EMBL/GenBank/DDBJ databases">
        <authorList>
            <person name="Cheung F."/>
            <person name="Xiao Y."/>
            <person name="Chan A."/>
            <person name="Moskal W."/>
            <person name="Town C.D."/>
        </authorList>
    </citation>
    <scope>NUCLEOTIDE SEQUENCE [LARGE SCALE MRNA]</scope>
</reference>
<accession>C6T0L2</accession>
<protein>
    <recommendedName>
        <fullName evidence="3">Protein SLE3</fullName>
    </recommendedName>
    <alternativeName>
        <fullName evidence="3">Soybean group-1 late embryogenesis abundant protein 3</fullName>
    </alternativeName>
    <alternativeName>
        <fullName evidence="3">Soybean group-1 lea protein 3</fullName>
        <shortName evidence="3">Sle3</shortName>
    </alternativeName>
</protein>
<gene>
    <name evidence="3" type="primary">SLE3</name>
    <name type="ordered locus">Glyma01g29480</name>
</gene>
<evidence type="ECO:0000256" key="1">
    <source>
        <dbReference type="SAM" id="MobiDB-lite"/>
    </source>
</evidence>
<evidence type="ECO:0000269" key="2">
    <source ref="1"/>
</evidence>
<evidence type="ECO:0000303" key="3">
    <source ref="1"/>
</evidence>
<evidence type="ECO:0000305" key="4"/>
<keyword id="KW-1185">Reference proteome</keyword>
<proteinExistence type="evidence at transcript level"/>